<keyword id="KW-0194">Cyanelle</keyword>
<keyword id="KW-0934">Plastid</keyword>
<keyword id="KW-0687">Ribonucleoprotein</keyword>
<keyword id="KW-0689">Ribosomal protein</keyword>
<keyword id="KW-0694">RNA-binding</keyword>
<keyword id="KW-0699">rRNA-binding</keyword>
<protein>
    <recommendedName>
        <fullName evidence="3">Small ribosomal subunit protein uS12c</fullName>
    </recommendedName>
    <alternativeName>
        <fullName>Cyanelle 30S ribosomal protein S12</fullName>
    </alternativeName>
</protein>
<gene>
    <name type="primary">rps12</name>
</gene>
<organism>
    <name type="scientific">Cyanophora paradoxa</name>
    <dbReference type="NCBI Taxonomy" id="2762"/>
    <lineage>
        <taxon>Eukaryota</taxon>
        <taxon>Glaucocystophyceae</taxon>
        <taxon>Cyanophoraceae</taxon>
        <taxon>Cyanophora</taxon>
    </lineage>
</organism>
<geneLocation type="cyanelle"/>
<feature type="chain" id="PRO_0000146387" description="Small ribosomal subunit protein uS12c">
    <location>
        <begin position="1"/>
        <end position="124"/>
    </location>
</feature>
<feature type="region of interest" description="Disordered" evidence="2">
    <location>
        <begin position="105"/>
        <end position="124"/>
    </location>
</feature>
<feature type="compositionally biased region" description="Basic residues" evidence="2">
    <location>
        <begin position="113"/>
        <end position="124"/>
    </location>
</feature>
<accession>P17294</accession>
<dbReference type="EMBL" id="X52497">
    <property type="protein sequence ID" value="CAA36738.1"/>
    <property type="molecule type" value="Genomic_DNA"/>
</dbReference>
<dbReference type="EMBL" id="U30821">
    <property type="protein sequence ID" value="AAA81240.1"/>
    <property type="molecule type" value="Genomic_DNA"/>
</dbReference>
<dbReference type="PIR" id="S14713">
    <property type="entry name" value="R3KT12"/>
</dbReference>
<dbReference type="RefSeq" id="NP_043209.1">
    <property type="nucleotide sequence ID" value="NC_001675.1"/>
</dbReference>
<dbReference type="SMR" id="P17294"/>
<dbReference type="GeneID" id="801575"/>
<dbReference type="GO" id="GO:0009842">
    <property type="term" value="C:cyanelle"/>
    <property type="evidence" value="ECO:0007669"/>
    <property type="project" value="UniProtKB-SubCell"/>
</dbReference>
<dbReference type="GO" id="GO:0015935">
    <property type="term" value="C:small ribosomal subunit"/>
    <property type="evidence" value="ECO:0007669"/>
    <property type="project" value="InterPro"/>
</dbReference>
<dbReference type="GO" id="GO:0019843">
    <property type="term" value="F:rRNA binding"/>
    <property type="evidence" value="ECO:0007669"/>
    <property type="project" value="UniProtKB-KW"/>
</dbReference>
<dbReference type="GO" id="GO:0003735">
    <property type="term" value="F:structural constituent of ribosome"/>
    <property type="evidence" value="ECO:0007669"/>
    <property type="project" value="InterPro"/>
</dbReference>
<dbReference type="GO" id="GO:0006412">
    <property type="term" value="P:translation"/>
    <property type="evidence" value="ECO:0007669"/>
    <property type="project" value="InterPro"/>
</dbReference>
<dbReference type="CDD" id="cd03368">
    <property type="entry name" value="Ribosomal_S12"/>
    <property type="match status" value="1"/>
</dbReference>
<dbReference type="FunFam" id="2.40.50.140:FF:000001">
    <property type="entry name" value="30S ribosomal protein S12"/>
    <property type="match status" value="1"/>
</dbReference>
<dbReference type="Gene3D" id="2.40.50.140">
    <property type="entry name" value="Nucleic acid-binding proteins"/>
    <property type="match status" value="1"/>
</dbReference>
<dbReference type="HAMAP" id="MF_00403_B">
    <property type="entry name" value="Ribosomal_uS12_B"/>
    <property type="match status" value="1"/>
</dbReference>
<dbReference type="InterPro" id="IPR012340">
    <property type="entry name" value="NA-bd_OB-fold"/>
</dbReference>
<dbReference type="InterPro" id="IPR006032">
    <property type="entry name" value="Ribosomal_uS12"/>
</dbReference>
<dbReference type="InterPro" id="IPR005679">
    <property type="entry name" value="Ribosomal_uS12_bac"/>
</dbReference>
<dbReference type="NCBIfam" id="TIGR00981">
    <property type="entry name" value="rpsL_bact"/>
    <property type="match status" value="1"/>
</dbReference>
<dbReference type="PANTHER" id="PTHR11652">
    <property type="entry name" value="30S RIBOSOMAL PROTEIN S12 FAMILY MEMBER"/>
    <property type="match status" value="1"/>
</dbReference>
<dbReference type="Pfam" id="PF00164">
    <property type="entry name" value="Ribosom_S12_S23"/>
    <property type="match status" value="1"/>
</dbReference>
<dbReference type="PIRSF" id="PIRSF002133">
    <property type="entry name" value="Ribosomal_S12/S23"/>
    <property type="match status" value="1"/>
</dbReference>
<dbReference type="PRINTS" id="PR01034">
    <property type="entry name" value="RIBOSOMALS12"/>
</dbReference>
<dbReference type="SUPFAM" id="SSF50249">
    <property type="entry name" value="Nucleic acid-binding proteins"/>
    <property type="match status" value="1"/>
</dbReference>
<dbReference type="PROSITE" id="PS00055">
    <property type="entry name" value="RIBOSOMAL_S12"/>
    <property type="match status" value="1"/>
</dbReference>
<reference key="1">
    <citation type="journal article" date="1990" name="Plant Mol. Biol.">
        <title>The cyanelle str operon from Cyanophora paradoxa: sequence analysis and phylogenetic implications.</title>
        <authorList>
            <person name="Kraus M."/>
            <person name="Goetz M."/>
            <person name="Loeffelhardt W."/>
        </authorList>
    </citation>
    <scope>NUCLEOTIDE SEQUENCE [GENOMIC DNA]</scope>
    <source>
        <strain>UTEX LB 555 / Pringsheim</strain>
    </source>
</reference>
<reference key="2">
    <citation type="journal article" date="1995" name="Plant Mol. Biol. Rep.">
        <title>Nucleotide sequence of the cyanelle DNA from Cyanophora paradoxa.</title>
        <authorList>
            <person name="Stirewalt V.L."/>
            <person name="Michalowski C.B."/>
            <person name="Loeffelhardt W."/>
            <person name="Bohnert H.J."/>
            <person name="Bryant D.A."/>
        </authorList>
    </citation>
    <scope>NUCLEOTIDE SEQUENCE [LARGE SCALE GENOMIC DNA]</scope>
    <source>
        <strain>UTEX LB 555 / Pringsheim</strain>
    </source>
</reference>
<reference key="3">
    <citation type="book" date="1997" name="Eukaryotism and symbiosis">
        <title>The complete sequence of the cyanelle genome of Cyanophora paradoxa: the genetic complexity of a primitive plastid.</title>
        <editorList>
            <person name="Schenk H.E.A."/>
            <person name="Herrmann R."/>
            <person name="Jeon K.W."/>
            <person name="Mueller N.E."/>
            <person name="Schwemmler W."/>
        </editorList>
        <authorList>
            <person name="Loeffelhardt W."/>
            <person name="Stirewalt V.L."/>
            <person name="Michalowski C.B."/>
            <person name="Annarella M."/>
            <person name="Farley J.Y."/>
            <person name="Schluchter W.M."/>
            <person name="Chung S."/>
            <person name="Newmann-Spallart C."/>
            <person name="Steiner J.M."/>
            <person name="Jakowitsch J."/>
            <person name="Bohnert H.J."/>
            <person name="Bryant D.A."/>
        </authorList>
    </citation>
    <scope>NUCLEOTIDE SEQUENCE [LARGE SCALE GENOMIC DNA]</scope>
    <source>
        <strain>UTEX LB 555 / Pringsheim</strain>
    </source>
</reference>
<comment type="function">
    <text evidence="1">With S4 and S5 plays an important role in translational accuracy. Located at the interface of the 30S and 50S subunits (By similarity).</text>
</comment>
<comment type="subunit">
    <text>Part of the 30S ribosomal subunit.</text>
</comment>
<comment type="subcellular location">
    <subcellularLocation>
        <location>Plastid</location>
        <location>Cyanelle</location>
    </subcellularLocation>
</comment>
<comment type="similarity">
    <text evidence="3">Belongs to the universal ribosomal protein uS12 family.</text>
</comment>
<evidence type="ECO:0000250" key="1"/>
<evidence type="ECO:0000256" key="2">
    <source>
        <dbReference type="SAM" id="MobiDB-lite"/>
    </source>
</evidence>
<evidence type="ECO:0000305" key="3"/>
<proteinExistence type="inferred from homology"/>
<sequence length="124" mass="13813">MPTIQQLIRSKRTKIEKKTKSPALKACPQRRGVCTRVYTTTPKKPNSALRKVARVRLTSGFEVTAYIPGIGHNLQEHSVVLVRGGRVKDLPGVRYHIVRGALDAAGVKDRRQSRSKYGAKRPKA</sequence>
<name>RR12_CYAPA</name>